<keyword id="KW-0025">Alternative splicing</keyword>
<keyword id="KW-0965">Cell junction</keyword>
<keyword id="KW-1003">Cell membrane</keyword>
<keyword id="KW-0966">Cell projection</keyword>
<keyword id="KW-0968">Cytoplasmic vesicle</keyword>
<keyword id="KW-0256">Endoplasmic reticulum</keyword>
<keyword id="KW-0551">Lipid droplet</keyword>
<keyword id="KW-0445">Lipid transport</keyword>
<keyword id="KW-0472">Membrane</keyword>
<keyword id="KW-0539">Nucleus</keyword>
<keyword id="KW-0628">Postsynaptic cell membrane</keyword>
<keyword id="KW-0675">Receptor</keyword>
<keyword id="KW-1185">Reference proteome</keyword>
<keyword id="KW-0770">Synapse</keyword>
<keyword id="KW-0812">Transmembrane</keyword>
<keyword id="KW-1133">Transmembrane helix</keyword>
<keyword id="KW-0813">Transport</keyword>
<sequence length="223" mass="25270">MPWAVGRRWAWITLFLTIVAVLIQAVWLWLGTQSFVFQREEIAQLARQYAGLDHELAFSRLIVELRRLHPGHVLPDEELQWVFVNAGGWMGAMCLLHASLSEYVLLFGTALGSHGHSGRYWAEISDTIISGTFHQWREGTTKSEVYYPGETVVHGPGEATAVEWGPNTWMVEYGRGVIPSTLAFALSDTIFSTQDFLTLFYTLRAYARGLRLELTTYLFGQDP</sequence>
<name>SGMR1_RAT</name>
<dbReference type="EMBL" id="AF004218">
    <property type="protein sequence ID" value="AAD01198.1"/>
    <property type="molecule type" value="mRNA"/>
</dbReference>
<dbReference type="EMBL" id="AF067769">
    <property type="protein sequence ID" value="AAF08342.1"/>
    <property type="molecule type" value="mRNA"/>
</dbReference>
<dbReference type="EMBL" id="AF087827">
    <property type="protein sequence ID" value="AAD49439.1"/>
    <property type="molecule type" value="mRNA"/>
</dbReference>
<dbReference type="EMBL" id="BC061978">
    <property type="protein sequence ID" value="AAH61978.1"/>
    <property type="molecule type" value="mRNA"/>
</dbReference>
<dbReference type="RefSeq" id="NP_112258.2">
    <molecule id="Q9R0C9-1"/>
    <property type="nucleotide sequence ID" value="NM_030996.2"/>
</dbReference>
<dbReference type="SMR" id="Q9R0C9"/>
<dbReference type="BioGRID" id="247995">
    <property type="interactions" value="1"/>
</dbReference>
<dbReference type="FunCoup" id="Q9R0C9">
    <property type="interactions" value="849"/>
</dbReference>
<dbReference type="IntAct" id="Q9R0C9">
    <property type="interactions" value="4"/>
</dbReference>
<dbReference type="STRING" id="10116.ENSRNOP00000019795"/>
<dbReference type="BindingDB" id="Q9R0C9"/>
<dbReference type="ChEMBL" id="CHEMBL3602"/>
<dbReference type="DrugCentral" id="Q9R0C9"/>
<dbReference type="GuidetoPHARMACOLOGY" id="2552"/>
<dbReference type="PhosphoSitePlus" id="Q9R0C9"/>
<dbReference type="PaxDb" id="10116-ENSRNOP00000019795"/>
<dbReference type="PeptideAtlas" id="Q9R0C9"/>
<dbReference type="Ensembl" id="ENSRNOT00000019795.5">
    <molecule id="Q9R0C9-1"/>
    <property type="protein sequence ID" value="ENSRNOP00000019795.2"/>
    <property type="gene ID" value="ENSRNOG00000014604.7"/>
</dbReference>
<dbReference type="GeneID" id="29336"/>
<dbReference type="KEGG" id="rno:29336"/>
<dbReference type="UCSC" id="RGD:68364">
    <molecule id="Q9R0C9-1"/>
    <property type="organism name" value="rat"/>
</dbReference>
<dbReference type="AGR" id="RGD:68364"/>
<dbReference type="CTD" id="10280"/>
<dbReference type="RGD" id="68364">
    <property type="gene designation" value="Sigmar1"/>
</dbReference>
<dbReference type="eggNOG" id="KOG4143">
    <property type="taxonomic scope" value="Eukaryota"/>
</dbReference>
<dbReference type="GeneTree" id="ENSGT00390000012082"/>
<dbReference type="HOGENOM" id="CLU_085469_0_0_1"/>
<dbReference type="InParanoid" id="Q9R0C9"/>
<dbReference type="OMA" id="AMYVIHA"/>
<dbReference type="OrthoDB" id="347124at2759"/>
<dbReference type="PhylomeDB" id="Q9R0C9"/>
<dbReference type="TreeFam" id="TF300106"/>
<dbReference type="PRO" id="PR:Q9R0C9"/>
<dbReference type="Proteomes" id="UP000002494">
    <property type="component" value="Chromosome 5"/>
</dbReference>
<dbReference type="Bgee" id="ENSRNOG00000014604">
    <property type="expression patterns" value="Expressed in liver and 20 other cell types or tissues"/>
</dbReference>
<dbReference type="GO" id="GO:0070161">
    <property type="term" value="C:anchoring junction"/>
    <property type="evidence" value="ECO:0007669"/>
    <property type="project" value="UniProtKB-SubCell"/>
</dbReference>
<dbReference type="GO" id="GO:0031410">
    <property type="term" value="C:cytoplasmic vesicle"/>
    <property type="evidence" value="ECO:0007669"/>
    <property type="project" value="UniProtKB-KW"/>
</dbReference>
<dbReference type="GO" id="GO:0005783">
    <property type="term" value="C:endoplasmic reticulum"/>
    <property type="evidence" value="ECO:0000266"/>
    <property type="project" value="RGD"/>
</dbReference>
<dbReference type="GO" id="GO:0005789">
    <property type="term" value="C:endoplasmic reticulum membrane"/>
    <property type="evidence" value="ECO:0007669"/>
    <property type="project" value="UniProtKB-SubCell"/>
</dbReference>
<dbReference type="GO" id="GO:0098978">
    <property type="term" value="C:glutamatergic synapse"/>
    <property type="evidence" value="ECO:0000314"/>
    <property type="project" value="SynGO"/>
</dbReference>
<dbReference type="GO" id="GO:0030426">
    <property type="term" value="C:growth cone"/>
    <property type="evidence" value="ECO:0007669"/>
    <property type="project" value="UniProtKB-SubCell"/>
</dbReference>
<dbReference type="GO" id="GO:0005811">
    <property type="term" value="C:lipid droplet"/>
    <property type="evidence" value="ECO:0007669"/>
    <property type="project" value="UniProtKB-SubCell"/>
</dbReference>
<dbReference type="GO" id="GO:0016020">
    <property type="term" value="C:membrane"/>
    <property type="evidence" value="ECO:0000250"/>
    <property type="project" value="UniProtKB"/>
</dbReference>
<dbReference type="GO" id="GO:0005635">
    <property type="term" value="C:nuclear envelope"/>
    <property type="evidence" value="ECO:0000266"/>
    <property type="project" value="RGD"/>
</dbReference>
<dbReference type="GO" id="GO:0005637">
    <property type="term" value="C:nuclear inner membrane"/>
    <property type="evidence" value="ECO:0007669"/>
    <property type="project" value="UniProtKB-SubCell"/>
</dbReference>
<dbReference type="GO" id="GO:0005640">
    <property type="term" value="C:nuclear outer membrane"/>
    <property type="evidence" value="ECO:0007669"/>
    <property type="project" value="UniProtKB-SubCell"/>
</dbReference>
<dbReference type="GO" id="GO:0098794">
    <property type="term" value="C:postsynapse"/>
    <property type="evidence" value="ECO:0000266"/>
    <property type="project" value="RGD"/>
</dbReference>
<dbReference type="GO" id="GO:0014069">
    <property type="term" value="C:postsynaptic density"/>
    <property type="evidence" value="ECO:0000266"/>
    <property type="project" value="RGD"/>
</dbReference>
<dbReference type="GO" id="GO:0098839">
    <property type="term" value="C:postsynaptic density membrane"/>
    <property type="evidence" value="ECO:0007669"/>
    <property type="project" value="UniProtKB-SubCell"/>
</dbReference>
<dbReference type="GO" id="GO:0004985">
    <property type="term" value="F:G protein-coupled opioid receptor activity"/>
    <property type="evidence" value="ECO:0000314"/>
    <property type="project" value="RGD"/>
</dbReference>
<dbReference type="GO" id="GO:0038023">
    <property type="term" value="F:signaling receptor activity"/>
    <property type="evidence" value="ECO:0000266"/>
    <property type="project" value="RGD"/>
</dbReference>
<dbReference type="GO" id="GO:0006869">
    <property type="term" value="P:lipid transport"/>
    <property type="evidence" value="ECO:0007669"/>
    <property type="project" value="UniProtKB-KW"/>
</dbReference>
<dbReference type="GO" id="GO:0007399">
    <property type="term" value="P:nervous system development"/>
    <property type="evidence" value="ECO:0000314"/>
    <property type="project" value="RGD"/>
</dbReference>
<dbReference type="GO" id="GO:0070207">
    <property type="term" value="P:protein homotrimerization"/>
    <property type="evidence" value="ECO:0000266"/>
    <property type="project" value="RGD"/>
</dbReference>
<dbReference type="GO" id="GO:0043523">
    <property type="term" value="P:regulation of neuron apoptotic process"/>
    <property type="evidence" value="ECO:0000250"/>
    <property type="project" value="UniProtKB"/>
</dbReference>
<dbReference type="GO" id="GO:0150052">
    <property type="term" value="P:regulation of postsynapse assembly"/>
    <property type="evidence" value="ECO:0000314"/>
    <property type="project" value="SynGO"/>
</dbReference>
<dbReference type="InterPro" id="IPR006716">
    <property type="entry name" value="ERG2_sigma1_rcpt-like"/>
</dbReference>
<dbReference type="PANTHER" id="PTHR10868">
    <property type="entry name" value="SIGMA 1-TYPE OPIOID RECEPTOR-RELATED"/>
    <property type="match status" value="1"/>
</dbReference>
<dbReference type="PANTHER" id="PTHR10868:SF1">
    <property type="entry name" value="SIGMA NON-OPIOID INTRACELLULAR RECEPTOR 1"/>
    <property type="match status" value="1"/>
</dbReference>
<dbReference type="Pfam" id="PF04622">
    <property type="entry name" value="ERG2_Sigma1R"/>
    <property type="match status" value="1"/>
</dbReference>
<feature type="chain" id="PRO_0000268655" description="Sigma non-opioid intracellular receptor 1">
    <location>
        <begin position="1"/>
        <end position="223"/>
    </location>
</feature>
<feature type="topological domain" description="Lumenal" evidence="4">
    <location>
        <begin position="1"/>
        <end position="9"/>
    </location>
</feature>
<feature type="transmembrane region" description="Helical" evidence="4">
    <location>
        <begin position="10"/>
        <end position="30"/>
    </location>
</feature>
<feature type="topological domain" description="Cytoplasmic" evidence="4">
    <location>
        <begin position="31"/>
        <end position="223"/>
    </location>
</feature>
<feature type="region of interest" description="Targeting to endoplasmic reticulum-associated lipid droplets" evidence="1">
    <location>
        <begin position="2"/>
        <end position="8"/>
    </location>
</feature>
<feature type="region of interest" description="Important for ligand-binding" evidence="3">
    <location>
        <begin position="99"/>
        <end position="106"/>
    </location>
</feature>
<feature type="region of interest" description="C-terminal hydrophobic region" evidence="17">
    <location>
        <begin position="177"/>
        <end position="223"/>
    </location>
</feature>
<feature type="site" description="Important for ligand binding" evidence="4">
    <location>
        <position position="126"/>
    </location>
</feature>
<feature type="site" description="Important for ligand binding" evidence="4">
    <location>
        <position position="172"/>
    </location>
</feature>
<feature type="splice variant" id="VSP_021988" description="In isoform 2." evidence="16">
    <original>YVLL</original>
    <variation>TILG</variation>
    <location>
        <begin position="103"/>
        <end position="106"/>
    </location>
</feature>
<feature type="splice variant" id="VSP_021989" description="In isoform 2." evidence="16">
    <location>
        <begin position="107"/>
        <end position="223"/>
    </location>
</feature>
<feature type="sequence conflict" description="In Ref. 1; AAD01198." evidence="17" ref="1">
    <original>A</original>
    <variation>D</variation>
    <location>
        <position position="161"/>
    </location>
</feature>
<gene>
    <name type="primary">Sigmar1</name>
    <name type="synonym">Oprs1</name>
</gene>
<evidence type="ECO:0000250" key="1">
    <source>
        <dbReference type="UniProtKB" id="O55242"/>
    </source>
</evidence>
<evidence type="ECO:0000250" key="2">
    <source>
        <dbReference type="UniProtKB" id="Q5BJF2"/>
    </source>
</evidence>
<evidence type="ECO:0000250" key="3">
    <source>
        <dbReference type="UniProtKB" id="Q60492"/>
    </source>
</evidence>
<evidence type="ECO:0000250" key="4">
    <source>
        <dbReference type="UniProtKB" id="Q99720"/>
    </source>
</evidence>
<evidence type="ECO:0000269" key="5">
    <source>
    </source>
</evidence>
<evidence type="ECO:0000269" key="6">
    <source>
    </source>
</evidence>
<evidence type="ECO:0000269" key="7">
    <source>
    </source>
</evidence>
<evidence type="ECO:0000269" key="8">
    <source>
    </source>
</evidence>
<evidence type="ECO:0000269" key="9">
    <source>
    </source>
</evidence>
<evidence type="ECO:0000269" key="10">
    <source>
    </source>
</evidence>
<evidence type="ECO:0000269" key="11">
    <source>
    </source>
</evidence>
<evidence type="ECO:0000269" key="12">
    <source>
    </source>
</evidence>
<evidence type="ECO:0000269" key="13">
    <source>
    </source>
</evidence>
<evidence type="ECO:0000269" key="14">
    <source>
    </source>
</evidence>
<evidence type="ECO:0000269" key="15">
    <source>
    </source>
</evidence>
<evidence type="ECO:0000303" key="16">
    <source>
    </source>
</evidence>
<evidence type="ECO:0000305" key="17"/>
<organism>
    <name type="scientific">Rattus norvegicus</name>
    <name type="common">Rat</name>
    <dbReference type="NCBI Taxonomy" id="10116"/>
    <lineage>
        <taxon>Eukaryota</taxon>
        <taxon>Metazoa</taxon>
        <taxon>Chordata</taxon>
        <taxon>Craniata</taxon>
        <taxon>Vertebrata</taxon>
        <taxon>Euteleostomi</taxon>
        <taxon>Mammalia</taxon>
        <taxon>Eutheria</taxon>
        <taxon>Euarchontoglires</taxon>
        <taxon>Glires</taxon>
        <taxon>Rodentia</taxon>
        <taxon>Myomorpha</taxon>
        <taxon>Muroidea</taxon>
        <taxon>Muridae</taxon>
        <taxon>Murinae</taxon>
        <taxon>Rattus</taxon>
    </lineage>
</organism>
<accession>Q9R0C9</accession>
<accession>Q9R1J7</accession>
<accession>Q9Z2W2</accession>
<reference key="1">
    <citation type="journal article" date="1998" name="J. Neurochem.">
        <title>Cloning and functional characterization of a sigma receptor from rat brain.</title>
        <authorList>
            <person name="Seth P."/>
            <person name="Fei Y.-J."/>
            <person name="Li H.W."/>
            <person name="Huang W."/>
            <person name="Leibach F.H."/>
            <person name="Ganapathy V."/>
        </authorList>
    </citation>
    <scope>NUCLEOTIDE SEQUENCE [MRNA] (ISOFORM 1)</scope>
    <scope>FUNCTION</scope>
    <scope>TISSUE SPECIFICITY</scope>
    <source>
        <strain>Sprague-Dawley</strain>
        <tissue>Brain</tissue>
    </source>
</reference>
<reference key="2">
    <citation type="journal article" date="2002" name="J. Pharmacol. Exp. Ther.">
        <title>Sigma1 receptor modulation of opioid analgesia in the mouse.</title>
        <authorList>
            <person name="Mei J."/>
            <person name="Pasternak G.W."/>
        </authorList>
    </citation>
    <scope>NUCLEOTIDE SEQUENCE [MRNA] (ISOFORMS 1 AND 2)</scope>
    <scope>FUNCTION</scope>
    <source>
        <tissue>Brain</tissue>
    </source>
</reference>
<reference key="3">
    <citation type="journal article" date="2004" name="Genome Res.">
        <title>The status, quality, and expansion of the NIH full-length cDNA project: the Mammalian Gene Collection (MGC).</title>
        <authorList>
            <consortium name="The MGC Project Team"/>
        </authorList>
    </citation>
    <scope>NUCLEOTIDE SEQUENCE [LARGE SCALE MRNA] (ISOFORM 1)</scope>
    <source>
        <tissue>Prostate</tissue>
    </source>
</reference>
<reference key="4">
    <citation type="journal article" date="2000" name="Neuroscience">
        <title>Immunocytochemical localization of the sigma(1) receptor in the adult rat central nervous system.</title>
        <authorList>
            <person name="Alonso G."/>
            <person name="Phan V.-L."/>
            <person name="Guillemain I."/>
            <person name="Saunier M."/>
            <person name="Legrand A."/>
            <person name="Anoal M."/>
            <person name="Maurice T."/>
        </authorList>
    </citation>
    <scope>TISSUE SPECIFICITY</scope>
    <scope>SUBCELLULAR LOCATION</scope>
</reference>
<reference key="5">
    <citation type="journal article" date="2001" name="Brain Res. Mol. Brain Res.">
        <title>Expression pattern of sigma receptor 1 mRNA and protein in mammalian retina.</title>
        <authorList>
            <person name="Ola M.S."/>
            <person name="Moore P."/>
            <person name="El-Sherbeny A."/>
            <person name="Roon P."/>
            <person name="Agarwal N."/>
            <person name="Sarthy V.P."/>
            <person name="Casellas P."/>
            <person name="Ganapathy V."/>
            <person name="Smith S.B."/>
        </authorList>
    </citation>
    <scope>TISSUE SPECIFICITY</scope>
</reference>
<reference key="6">
    <citation type="journal article" date="2001" name="Proc. Natl. Acad. Sci. U.S.A.">
        <title>Regulating ankyrin dynamics: roles of sigma-1 receptors.</title>
        <authorList>
            <person name="Hayashi T."/>
            <person name="Su T.-P."/>
        </authorList>
    </citation>
    <scope>INTERACTION WITH ANK2 AND ITPR3</scope>
    <scope>SUBCELLULAR LOCATION</scope>
</reference>
<reference key="7">
    <citation type="journal article" date="2002" name="Neuron">
        <title>The sigma receptor as a ligand-regulated auxiliary potassium channel subunit.</title>
        <authorList>
            <person name="Aydar E."/>
            <person name="Palmer C.P."/>
            <person name="Klyachko V.A."/>
            <person name="Jackson M.B."/>
        </authorList>
    </citation>
    <scope>FUNCTION</scope>
    <scope>TOPOLOGY</scope>
    <scope>SUBCELLULAR LOCATION</scope>
    <scope>INTERACTION WITH KCNA4</scope>
</reference>
<reference key="8">
    <citation type="journal article" date="2003" name="Brain Res.">
        <title>Immunohistochemical localization of the sigma1-receptor in oligodendrocytes in the rat central nervous system.</title>
        <authorList>
            <person name="Palacios G."/>
            <person name="Muro A."/>
            <person name="Vela J.M."/>
            <person name="Molina-Holgado E."/>
            <person name="Guitart X."/>
            <person name="Ovalle S."/>
            <person name="Zamanillo D."/>
        </authorList>
    </citation>
    <scope>TISSUE SPECIFICITY</scope>
</reference>
<reference key="9">
    <citation type="journal article" date="2004" name="Brain Res.">
        <title>Immunohistochemical localization of the sigma1 receptor in Schwann cells of rat sciatic nerve.</title>
        <authorList>
            <person name="Palacios G."/>
            <person name="Muro A."/>
            <person name="Verdu E."/>
            <person name="Pumarola M."/>
            <person name="Vela J.M."/>
        </authorList>
    </citation>
    <scope>TISSUE SPECIFICITY</scope>
</reference>
<reference key="10">
    <citation type="journal article" date="2004" name="Proc. Natl. Acad. Sci. U.S.A.">
        <title>Sigma-1 receptors at galactosylceramide-enriched lipid microdomains regulate oligodendrocyte differentiation.</title>
        <authorList>
            <person name="Hayashi T."/>
            <person name="Su T.-P."/>
        </authorList>
    </citation>
    <scope>FUNCTION</scope>
    <scope>SUBCELLULAR LOCATION</scope>
</reference>
<reference key="11">
    <citation type="journal article" date="2004" name="Synapse">
        <title>Sigma-1 receptors potentiate epidermal growth factor signaling towards neuritogenesis in PC12 cells: potential relation to lipid raft reconstitution.</title>
        <authorList>
            <person name="Takebayashi M."/>
            <person name="Hayashi T."/>
            <person name="Su T.-P."/>
        </authorList>
    </citation>
    <scope>FUNCTION</scope>
</reference>
<reference key="12">
    <citation type="journal article" date="2006" name="J. Biol. Chem.">
        <title>Chronic antidepressants potentiate via sigma-1 receptors the brain-derived neurotrophic factor-induced signaling for glutamate release.</title>
        <authorList>
            <person name="Yagasaki Y."/>
            <person name="Numakawa T."/>
            <person name="Kumamaru E."/>
            <person name="Hayashi T."/>
            <person name="Su T.-P."/>
            <person name="Kunugi H."/>
        </authorList>
    </citation>
    <scope>FUNCTION</scope>
</reference>
<proteinExistence type="evidence at protein level"/>
<comment type="function">
    <text evidence="1 8 9 12 13 14 15">Functions in lipid transport from the endoplasmic reticulum and is involved in a wide array of cellular functions probably through regulation of the biogenesis of lipid microdomains at the plasma membrane. Involved in the regulation of different receptors it plays a role in BDNF signaling and EGF signaling. Also regulates ion channels like the potassium channel and could modulate neurotransmitter release. Plays a role in calcium signaling through modulation together with ANK2 of the ITP3R-dependent calcium efflux at the endoplasmic reticulum. Plays a role in several other cell functions including proliferation, survival and death. Originally identified for its ability to bind various psychoactive drugs it is involved in learning processes, memory and mood alteration. Necessary for proper mitochondrial axonal transport in motor neurons, in particular the retrograde movement of mitochondria. Plays a role in protecting cells against oxidative stress-induced cell death via its interaction with RNF112 (By similarity).</text>
</comment>
<comment type="subunit">
    <text evidence="1 4 6 9">Homotrimer (By similarity). Interacts with KCNA2; cocaine consumption leads to increased interaction (By similarity). Forms a ternary complex with ANK2 and ITPR3. The complex is disrupted by agonists (PubMed:11149946). Interacts with KCNA4 (PubMed:11988171). Interacts with RNF112 in an oxidative stress-regulated manner (By similarity).</text>
</comment>
<comment type="interaction">
    <interactant intactId="EBI-1557826">
        <id>Q9R0C9</id>
    </interactant>
    <interactant intactId="EBI-916036">
        <id>P06761</id>
        <label>Hspa5</label>
    </interactant>
    <organismsDiffer>false</organismsDiffer>
    <experiments>3</experiments>
</comment>
<comment type="interaction">
    <interactant intactId="EBI-1557826">
        <id>Q9R0C9</id>
    </interactant>
    <interactant intactId="EBI-644033">
        <id>P63141</id>
        <label>Kcna2</label>
    </interactant>
    <organismsDiffer>true</organismsDiffer>
    <experiments>3</experiments>
</comment>
<comment type="subcellular location">
    <subcellularLocation>
        <location evidence="4">Nucleus inner membrane</location>
    </subcellularLocation>
    <subcellularLocation>
        <location evidence="4">Nucleus outer membrane</location>
    </subcellularLocation>
    <subcellularLocation>
        <location evidence="4">Nucleus envelope</location>
    </subcellularLocation>
    <subcellularLocation>
        <location evidence="4">Cytoplasmic vesicle</location>
    </subcellularLocation>
    <subcellularLocation>
        <location evidence="13">Endoplasmic reticulum membrane</location>
    </subcellularLocation>
    <subcellularLocation>
        <location evidence="4">Membrane</location>
        <topology evidence="4">Single-pass membrane protein</topology>
    </subcellularLocation>
    <subcellularLocation>
        <location evidence="13">Lipid droplet</location>
    </subcellularLocation>
    <subcellularLocation>
        <location evidence="4">Cell junction</location>
    </subcellularLocation>
    <subcellularLocation>
        <location evidence="4">Cell membrane</location>
    </subcellularLocation>
    <subcellularLocation>
        <location evidence="4">Cell projection</location>
        <location evidence="4">Growth cone</location>
    </subcellularLocation>
    <subcellularLocation>
        <location evidence="4">Postsynaptic density membrane</location>
    </subcellularLocation>
    <text evidence="1 4 13">During interphase, detected at the inner and outer nuclear membrane and the endoplasmic reticulum. Detected on cytoplasmic vesicles during mitosis (By similarity). Targeted to lipid droplets, cholesterol and galactosylceramide-enriched domains of the endoplasmic reticulum (PubMed:15466698). Enriched at cell-cell communication regions, growth cone and postsynaptic structures. Localization is modulated by ligand-binding. In motor neurons it is enriched at cholinergic postsynaptic densities (By similarity).</text>
</comment>
<comment type="alternative products">
    <event type="alternative splicing"/>
    <isoform>
        <id>Q9R0C9-1</id>
        <name>1</name>
        <sequence type="displayed"/>
    </isoform>
    <isoform>
        <id>Q9R0C9-2</id>
        <name>2</name>
        <sequence type="described" ref="VSP_021988 VSP_021989"/>
    </isoform>
</comment>
<comment type="tissue specificity">
    <text evidence="5 7 10 11 15">Expressed in ependymocytes and neurons throughout the CNS from the olfactory bulb to the spinal cord. Expressed by progenitor, mature and satellite oligodendrocytes and by Schwann cells (at protein level). Expressed in liver, intestine, kidney, brain, lung and heart. Expressed by retinal cells.</text>
</comment>
<comment type="domain">
    <text evidence="4">The C-terminal helices form a flat, hydrophobic surface that is probably tightly associated with the cytosolic surface of the endoplasmic reticulum membrane.</text>
</comment>
<comment type="miscellaneous">
    <text>Depletion by RNAi alters oligodendrocyte differentiation and enhances opioid analgesia.</text>
</comment>
<comment type="miscellaneous">
    <text evidence="2">Sigma receptors are classified into two subtypes (Sigma-1 and Sigma-2) based on their different pharmacological profile.</text>
</comment>
<comment type="similarity">
    <text evidence="17">Belongs to the ERG2 family.</text>
</comment>
<protein>
    <recommendedName>
        <fullName>Sigma non-opioid intracellular receptor 1</fullName>
    </recommendedName>
    <alternativeName>
        <fullName>Sigma 1-type opioid receptor</fullName>
        <shortName>Sigma1-receptor</shortName>
        <shortName>Sigma1R</shortName>
    </alternativeName>
</protein>